<sequence>MLKLRDWQEKLKDKVIEGLRNNFLVALNAPTGSGKTLFSLLVSLEVKPKVLFVVRTHNEFYPIYRDLTKIREKRNITFSFLVGKPSSCLYAEKGAESEDIPCKYCELKGSIVEVKTDDSPLSLVKKLKKDGLQDKFCPYYSLLNSLYKADVIALTYPYFFIDRYREFIDIDLREYMIVIDEAHNLDKVNELEERSLSEITIQMAIKQSKSEESRRILSKLLNQLREVVLPDEKYIKVENVPKLSKEELEILADDYEDIRKDSLKQGKVNKIHIGSILRFFSLLSIGSFIPFSYSKRLVIKNPEISYYLNLLNDNELSIILMSGTLPPREYMEKVWGIKRNMLYLDVEREIQKRVSGSYECYIGVDVTSKYDMRSDNMWKRYADYLLKIYFQAKANVLVVFPSYEIMDRVMSRISLPKYVESEDSSVEDLYSAISANNKVLIGSVGKGKLAEGIELRNNDRSLISDVVIVGIPYPPPDDYLKILAQRVSLKMNRENEEFLFKIPALVTIKQAIGRAIRDVNDKCNVWLLDKRFESLYWKKNLKCLNANKMKL</sequence>
<name>XPD_SULAC</name>
<feature type="chain" id="PRO_0000352309" description="ATP-dependent DNA helicase XPD">
    <location>
        <begin position="1"/>
        <end position="551"/>
    </location>
</feature>
<feature type="domain" description="Helicase ATP-binding" evidence="1">
    <location>
        <begin position="1"/>
        <end position="228"/>
    </location>
</feature>
<feature type="short sequence motif" description="DEAH box">
    <location>
        <begin position="180"/>
        <end position="183"/>
    </location>
</feature>
<feature type="binding site" evidence="1">
    <location>
        <begin position="29"/>
        <end position="36"/>
    </location>
    <ligand>
        <name>ATP</name>
        <dbReference type="ChEBI" id="CHEBI:30616"/>
    </ligand>
</feature>
<feature type="binding site" evidence="3 8 10">
    <location>
        <position position="88"/>
    </location>
    <ligand>
        <name>[4Fe-4S] cluster</name>
        <dbReference type="ChEBI" id="CHEBI:49883"/>
    </ligand>
</feature>
<feature type="binding site" evidence="3 8 10">
    <location>
        <position position="102"/>
    </location>
    <ligand>
        <name>[4Fe-4S] cluster</name>
        <dbReference type="ChEBI" id="CHEBI:49883"/>
    </ligand>
</feature>
<feature type="binding site" evidence="3 8 10">
    <location>
        <position position="105"/>
    </location>
    <ligand>
        <name>[4Fe-4S] cluster</name>
        <dbReference type="ChEBI" id="CHEBI:49883"/>
    </ligand>
</feature>
<feature type="binding site" evidence="3 8 10">
    <location>
        <position position="137"/>
    </location>
    <ligand>
        <name>[4Fe-4S] cluster</name>
        <dbReference type="ChEBI" id="CHEBI:49883"/>
    </ligand>
</feature>
<feature type="mutagenesis site" description="Loss of helicase and ATPase but not ssDNA-binding." evidence="3">
    <original>G</original>
    <variation>R</variation>
    <location>
        <position position="34"/>
    </location>
</feature>
<feature type="mutagenesis site" description="Abolishes helicase activity but not [4Fe-4S]-binding." evidence="2">
    <original>K</original>
    <variation>A</variation>
    <location>
        <position position="35"/>
    </location>
</feature>
<feature type="mutagenesis site" description="Impairs [4Fe-4S]-binding and helicase activity. Loss of helicase, retains 90% ATPase, 60% ssDNA-binding." evidence="2 3">
    <original>K</original>
    <variation>H</variation>
    <location>
        <position position="84"/>
    </location>
</feature>
<feature type="mutagenesis site" description="Abolishes [4Fe-4S]-binding and helicase activity. Loss of helicase, retains 40% ATPase." evidence="2 3">
    <original>C</original>
    <variation>S</variation>
    <location>
        <position position="88"/>
    </location>
</feature>
<feature type="mutagenesis site" description="Does not affect [4Fe-4S]-binding nor helicase activity. Loss of helicase, retains 20% ATPase." evidence="2 3">
    <original>C</original>
    <variation>S</variation>
    <location>
        <position position="102"/>
    </location>
</feature>
<feature type="mutagenesis site" description="Abolishes [4Fe-4S]-binding and helicase activity." evidence="2">
    <original>C</original>
    <variation>S</variation>
    <location>
        <position position="105"/>
    </location>
</feature>
<feature type="mutagenesis site" description="Impairs [4Fe-4S]-binding and helicase activity." evidence="2">
    <original>F</original>
    <variation>P</variation>
    <location>
        <position position="136"/>
    </location>
</feature>
<feature type="mutagenesis site" description="Abolishes [4Fe-4S]-binding and helicase activity." evidence="2">
    <original>C</original>
    <variation>S</variation>
    <location>
        <position position="137"/>
    </location>
</feature>
<feature type="mutagenesis site" description="Loss of helicase and ATPase, 80% ssDNA-binding." evidence="3">
    <original>R</original>
    <variation>W</variation>
    <location>
        <position position="514"/>
    </location>
</feature>
<feature type="mutagenesis site" description="Retains 20% helicase and 30% ATPase, wild-type ssDNA-binding." evidence="3">
    <original>D</original>
    <variation>G</variation>
    <location>
        <position position="521"/>
    </location>
</feature>
<feature type="mutagenesis site" description="Loss of helicase and ATPase." evidence="3">
    <original>R</original>
    <variation>W</variation>
    <location>
        <position position="531"/>
    </location>
</feature>
<feature type="helix" evidence="11">
    <location>
        <begin position="6"/>
        <end position="20"/>
    </location>
</feature>
<feature type="strand" evidence="11">
    <location>
        <begin position="24"/>
        <end position="28"/>
    </location>
</feature>
<feature type="strand" evidence="12">
    <location>
        <begin position="31"/>
        <end position="34"/>
    </location>
</feature>
<feature type="helix" evidence="11">
    <location>
        <begin position="35"/>
        <end position="46"/>
    </location>
</feature>
<feature type="strand" evidence="11">
    <location>
        <begin position="48"/>
        <end position="56"/>
    </location>
</feature>
<feature type="helix" evidence="11">
    <location>
        <begin position="57"/>
        <end position="59"/>
    </location>
</feature>
<feature type="helix" evidence="11">
    <location>
        <begin position="60"/>
        <end position="67"/>
    </location>
</feature>
<feature type="strand" evidence="11">
    <location>
        <begin position="78"/>
        <end position="80"/>
    </location>
</feature>
<feature type="helix" evidence="11">
    <location>
        <begin position="84"/>
        <end position="87"/>
    </location>
</feature>
<feature type="helix" evidence="11">
    <location>
        <begin position="97"/>
        <end position="99"/>
    </location>
</feature>
<feature type="helix" evidence="11">
    <location>
        <begin position="102"/>
        <end position="104"/>
    </location>
</feature>
<feature type="turn" evidence="11">
    <location>
        <begin position="106"/>
        <end position="109"/>
    </location>
</feature>
<feature type="helix" evidence="11">
    <location>
        <begin position="120"/>
        <end position="134"/>
    </location>
</feature>
<feature type="helix" evidence="11">
    <location>
        <begin position="138"/>
        <end position="145"/>
    </location>
</feature>
<feature type="helix" evidence="11">
    <location>
        <begin position="146"/>
        <end position="148"/>
    </location>
</feature>
<feature type="strand" evidence="11">
    <location>
        <begin position="150"/>
        <end position="155"/>
    </location>
</feature>
<feature type="helix" evidence="11">
    <location>
        <begin position="157"/>
        <end position="160"/>
    </location>
</feature>
<feature type="helix" evidence="11">
    <location>
        <begin position="162"/>
        <end position="165"/>
    </location>
</feature>
<feature type="helix" evidence="12">
    <location>
        <begin position="172"/>
        <end position="174"/>
    </location>
</feature>
<feature type="strand" evidence="11">
    <location>
        <begin position="175"/>
        <end position="179"/>
    </location>
</feature>
<feature type="helix" evidence="11">
    <location>
        <begin position="182"/>
        <end position="192"/>
    </location>
</feature>
<feature type="strand" evidence="11">
    <location>
        <begin position="194"/>
        <end position="196"/>
    </location>
</feature>
<feature type="helix" evidence="11">
    <location>
        <begin position="198"/>
        <end position="207"/>
    </location>
</feature>
<feature type="helix" evidence="11">
    <location>
        <begin position="211"/>
        <end position="224"/>
    </location>
</feature>
<feature type="helix" evidence="11">
    <location>
        <begin position="245"/>
        <end position="264"/>
    </location>
</feature>
<feature type="helix" evidence="11">
    <location>
        <begin position="272"/>
        <end position="285"/>
    </location>
</feature>
<feature type="strand" evidence="11">
    <location>
        <begin position="289"/>
        <end position="293"/>
    </location>
</feature>
<feature type="strand" evidence="11">
    <location>
        <begin position="296"/>
        <end position="300"/>
    </location>
</feature>
<feature type="helix" evidence="11">
    <location>
        <begin position="305"/>
        <end position="308"/>
    </location>
</feature>
<feature type="helix" evidence="11">
    <location>
        <begin position="309"/>
        <end position="312"/>
    </location>
</feature>
<feature type="strand" evidence="11">
    <location>
        <begin position="317"/>
        <end position="324"/>
    </location>
</feature>
<feature type="helix" evidence="11">
    <location>
        <begin position="328"/>
        <end position="333"/>
    </location>
</feature>
<feature type="strand" evidence="11">
    <location>
        <begin position="341"/>
        <end position="345"/>
    </location>
</feature>
<feature type="helix" evidence="11">
    <location>
        <begin position="346"/>
        <end position="349"/>
    </location>
</feature>
<feature type="strand" evidence="11">
    <location>
        <begin position="357"/>
        <end position="363"/>
    </location>
</feature>
<feature type="turn" evidence="11">
    <location>
        <begin position="370"/>
        <end position="372"/>
    </location>
</feature>
<feature type="helix" evidence="11">
    <location>
        <begin position="375"/>
        <end position="391"/>
    </location>
</feature>
<feature type="strand" evidence="11">
    <location>
        <begin position="393"/>
        <end position="401"/>
    </location>
</feature>
<feature type="helix" evidence="11">
    <location>
        <begin position="403"/>
        <end position="410"/>
    </location>
</feature>
<feature type="strand" evidence="11">
    <location>
        <begin position="415"/>
        <end position="419"/>
    </location>
</feature>
<feature type="helix" evidence="11">
    <location>
        <begin position="426"/>
        <end position="432"/>
    </location>
</feature>
<feature type="strand" evidence="11">
    <location>
        <begin position="435"/>
        <end position="438"/>
    </location>
</feature>
<feature type="strand" evidence="11">
    <location>
        <begin position="440"/>
        <end position="446"/>
    </location>
</feature>
<feature type="strand" evidence="11">
    <location>
        <begin position="460"/>
        <end position="470"/>
    </location>
</feature>
<feature type="helix" evidence="11">
    <location>
        <begin position="478"/>
        <end position="486"/>
    </location>
</feature>
<feature type="turn" evidence="11">
    <location>
        <begin position="493"/>
        <end position="495"/>
    </location>
</feature>
<feature type="helix" evidence="11">
    <location>
        <begin position="496"/>
        <end position="499"/>
    </location>
</feature>
<feature type="helix" evidence="11">
    <location>
        <begin position="501"/>
        <end position="513"/>
    </location>
</feature>
<feature type="strand" evidence="11">
    <location>
        <begin position="522"/>
        <end position="529"/>
    </location>
</feature>
<feature type="helix" evidence="11">
    <location>
        <begin position="530"/>
        <end position="533"/>
    </location>
</feature>
<feature type="helix" evidence="11">
    <location>
        <begin position="535"/>
        <end position="540"/>
    </location>
</feature>
<feature type="strand" evidence="11">
    <location>
        <begin position="547"/>
        <end position="549"/>
    </location>
</feature>
<dbReference type="EC" id="5.6.2.3" evidence="2"/>
<dbReference type="EMBL" id="CP000077">
    <property type="protein sequence ID" value="AAY79611.1"/>
    <property type="molecule type" value="Genomic_DNA"/>
</dbReference>
<dbReference type="RefSeq" id="WP_011277112.1">
    <property type="nucleotide sequence ID" value="NC_007181.1"/>
</dbReference>
<dbReference type="PDB" id="3CRV">
    <property type="method" value="X-ray"/>
    <property type="resolution" value="2.00 A"/>
    <property type="chains" value="A=1-551"/>
</dbReference>
<dbReference type="PDB" id="3CRW">
    <property type="method" value="X-ray"/>
    <property type="resolution" value="4.00 A"/>
    <property type="chains" value="1=1-551"/>
</dbReference>
<dbReference type="PDB" id="5H8C">
    <property type="method" value="X-ray"/>
    <property type="resolution" value="2.29 A"/>
    <property type="chains" value="A=8-346"/>
</dbReference>
<dbReference type="PDBsum" id="3CRV"/>
<dbReference type="PDBsum" id="3CRW"/>
<dbReference type="PDBsum" id="5H8C"/>
<dbReference type="SMR" id="Q4JC68"/>
<dbReference type="STRING" id="330779.Saci_0192"/>
<dbReference type="GeneID" id="14550720"/>
<dbReference type="KEGG" id="sai:Saci_0192"/>
<dbReference type="PATRIC" id="fig|330779.12.peg.184"/>
<dbReference type="eggNOG" id="arCOG00770">
    <property type="taxonomic scope" value="Archaea"/>
</dbReference>
<dbReference type="HOGENOM" id="CLU_006515_9_0_2"/>
<dbReference type="BRENDA" id="3.6.4.12">
    <property type="organism ID" value="6160"/>
</dbReference>
<dbReference type="EvolutionaryTrace" id="Q4JC68"/>
<dbReference type="Proteomes" id="UP000001018">
    <property type="component" value="Chromosome"/>
</dbReference>
<dbReference type="GO" id="GO:0051539">
    <property type="term" value="F:4 iron, 4 sulfur cluster binding"/>
    <property type="evidence" value="ECO:0000314"/>
    <property type="project" value="UniProtKB"/>
</dbReference>
<dbReference type="GO" id="GO:0043139">
    <property type="term" value="F:5'-3' DNA helicase activity"/>
    <property type="evidence" value="ECO:0000314"/>
    <property type="project" value="UniProtKB"/>
</dbReference>
<dbReference type="GO" id="GO:0005524">
    <property type="term" value="F:ATP binding"/>
    <property type="evidence" value="ECO:0007669"/>
    <property type="project" value="UniProtKB-KW"/>
</dbReference>
<dbReference type="GO" id="GO:0016887">
    <property type="term" value="F:ATP hydrolysis activity"/>
    <property type="evidence" value="ECO:0007669"/>
    <property type="project" value="RHEA"/>
</dbReference>
<dbReference type="GO" id="GO:0003677">
    <property type="term" value="F:DNA binding"/>
    <property type="evidence" value="ECO:0007669"/>
    <property type="project" value="UniProtKB-KW"/>
</dbReference>
<dbReference type="GO" id="GO:0046872">
    <property type="term" value="F:metal ion binding"/>
    <property type="evidence" value="ECO:0000269"/>
    <property type="project" value="DisProt"/>
</dbReference>
<dbReference type="GO" id="GO:0006281">
    <property type="term" value="P:DNA repair"/>
    <property type="evidence" value="ECO:0007669"/>
    <property type="project" value="UniProtKB-KW"/>
</dbReference>
<dbReference type="CDD" id="cd17915">
    <property type="entry name" value="DEAHc_XPD-like"/>
    <property type="match status" value="1"/>
</dbReference>
<dbReference type="CDD" id="cd18788">
    <property type="entry name" value="SF2_C_XPD"/>
    <property type="match status" value="1"/>
</dbReference>
<dbReference type="DisProt" id="DP01941"/>
<dbReference type="FunFam" id="3.40.50.300:FF:001813">
    <property type="entry name" value="ATP-dependent DNA helicase"/>
    <property type="match status" value="1"/>
</dbReference>
<dbReference type="FunFam" id="3.40.50.300:FF:002255">
    <property type="entry name" value="ATP-dependent DNA helicase"/>
    <property type="match status" value="1"/>
</dbReference>
<dbReference type="Gene3D" id="1.10.275.30">
    <property type="match status" value="1"/>
</dbReference>
<dbReference type="Gene3D" id="3.40.50.300">
    <property type="entry name" value="P-loop containing nucleotide triphosphate hydrolases"/>
    <property type="match status" value="2"/>
</dbReference>
<dbReference type="InterPro" id="IPR006555">
    <property type="entry name" value="ATP-dep_Helicase_C"/>
</dbReference>
<dbReference type="InterPro" id="IPR045028">
    <property type="entry name" value="DinG/Rad3-like"/>
</dbReference>
<dbReference type="InterPro" id="IPR014013">
    <property type="entry name" value="Helic_SF1/SF2_ATP-bd_DinG/Rad3"/>
</dbReference>
<dbReference type="InterPro" id="IPR006554">
    <property type="entry name" value="Helicase-like_DEXD_c2"/>
</dbReference>
<dbReference type="InterPro" id="IPR014001">
    <property type="entry name" value="Helicase_ATP-bd"/>
</dbReference>
<dbReference type="InterPro" id="IPR027417">
    <property type="entry name" value="P-loop_NTPase"/>
</dbReference>
<dbReference type="InterPro" id="IPR010614">
    <property type="entry name" value="RAD3-like_helicase_DEAD"/>
</dbReference>
<dbReference type="PANTHER" id="PTHR11472">
    <property type="entry name" value="DNA REPAIR DEAD HELICASE RAD3/XP-D SUBFAMILY MEMBER"/>
    <property type="match status" value="1"/>
</dbReference>
<dbReference type="PANTHER" id="PTHR11472:SF34">
    <property type="entry name" value="REGULATOR OF TELOMERE ELONGATION HELICASE 1"/>
    <property type="match status" value="1"/>
</dbReference>
<dbReference type="Pfam" id="PF06733">
    <property type="entry name" value="DEAD_2"/>
    <property type="match status" value="1"/>
</dbReference>
<dbReference type="Pfam" id="PF13307">
    <property type="entry name" value="Helicase_C_2"/>
    <property type="match status" value="1"/>
</dbReference>
<dbReference type="SMART" id="SM00488">
    <property type="entry name" value="DEXDc2"/>
    <property type="match status" value="1"/>
</dbReference>
<dbReference type="SMART" id="SM00491">
    <property type="entry name" value="HELICc2"/>
    <property type="match status" value="1"/>
</dbReference>
<dbReference type="SUPFAM" id="SSF52540">
    <property type="entry name" value="P-loop containing nucleoside triphosphate hydrolases"/>
    <property type="match status" value="1"/>
</dbReference>
<dbReference type="PROSITE" id="PS51193">
    <property type="entry name" value="HELICASE_ATP_BIND_2"/>
    <property type="match status" value="1"/>
</dbReference>
<accession>Q4JC68</accession>
<proteinExistence type="evidence at protein level"/>
<organism>
    <name type="scientific">Sulfolobus acidocaldarius (strain ATCC 33909 / DSM 639 / JCM 8929 / NBRC 15157 / NCIMB 11770)</name>
    <dbReference type="NCBI Taxonomy" id="330779"/>
    <lineage>
        <taxon>Archaea</taxon>
        <taxon>Thermoproteota</taxon>
        <taxon>Thermoprotei</taxon>
        <taxon>Sulfolobales</taxon>
        <taxon>Sulfolobaceae</taxon>
        <taxon>Sulfolobus</taxon>
    </lineage>
</organism>
<comment type="function">
    <text evidence="2 3">ATP-dependent 5'-3' DNA helicase (PubMed:16973432, PubMed:18510924). Thought to be involved in nucleotide excision repair (NER) of DNA (Probable).</text>
</comment>
<comment type="catalytic activity">
    <reaction evidence="2 3">
        <text>Couples ATP hydrolysis with the unwinding of duplex DNA at the replication fork by translocating in the 5'-3' direction. This creates two antiparallel DNA single strands (ssDNA). The leading ssDNA polymer is the template for DNA polymerase III holoenzyme which synthesizes a continuous strand.</text>
        <dbReference type="EC" id="5.6.2.3"/>
    </reaction>
</comment>
<comment type="catalytic activity">
    <reaction evidence="2 3">
        <text>ATP + H2O = ADP + phosphate + H(+)</text>
        <dbReference type="Rhea" id="RHEA:13065"/>
        <dbReference type="ChEBI" id="CHEBI:15377"/>
        <dbReference type="ChEBI" id="CHEBI:15378"/>
        <dbReference type="ChEBI" id="CHEBI:30616"/>
        <dbReference type="ChEBI" id="CHEBI:43474"/>
        <dbReference type="ChEBI" id="CHEBI:456216"/>
        <dbReference type="EC" id="5.6.2.3"/>
    </reaction>
</comment>
<comment type="cofactor">
    <cofactor evidence="2 3 4">
        <name>[4Fe-4S] cluster</name>
        <dbReference type="ChEBI" id="CHEBI:49883"/>
    </cofactor>
    <text evidence="2 3 4">Binds 1 [4Fe-4S] cluster (PubMed:16973432, PubMed:18510924, PubMed:26896802).</text>
</comment>
<comment type="biophysicochemical properties">
    <temperatureDependence>
        <text evidence="2">Optimum temperature is 85 degrees Celsius for ssDNA-dependent ATPase, higher temperatures were not tested (PubMed:16973432).</text>
    </temperatureDependence>
</comment>
<comment type="subunit">
    <text evidence="2 3 4">Monomer (PubMed:16973432, PubMed:18510924, PubMed:26896802).</text>
</comment>
<comment type="domain">
    <text evidence="3">[4Fe-4S]-binding is required for protein stability and helicase activity.</text>
</comment>
<comment type="similarity">
    <text evidence="7">Belongs to the helicase family. RAD3/XPD subfamily.</text>
</comment>
<keyword id="KW-0002">3D-structure</keyword>
<keyword id="KW-0004">4Fe-4S</keyword>
<keyword id="KW-0067">ATP-binding</keyword>
<keyword id="KW-0227">DNA damage</keyword>
<keyword id="KW-0234">DNA repair</keyword>
<keyword id="KW-0238">DNA-binding</keyword>
<keyword id="KW-0347">Helicase</keyword>
<keyword id="KW-0378">Hydrolase</keyword>
<keyword id="KW-0408">Iron</keyword>
<keyword id="KW-0411">Iron-sulfur</keyword>
<keyword id="KW-0413">Isomerase</keyword>
<keyword id="KW-0479">Metal-binding</keyword>
<keyword id="KW-0547">Nucleotide-binding</keyword>
<keyword id="KW-1185">Reference proteome</keyword>
<keyword id="KW-0804">Transcription</keyword>
<protein>
    <recommendedName>
        <fullName evidence="5">ATP-dependent DNA helicase XPD</fullName>
        <shortName evidence="6">SaXPD</shortName>
        <ecNumber evidence="2">5.6.2.3</ecNumber>
    </recommendedName>
    <alternativeName>
        <fullName evidence="7">DNA 5'-3' helicase XPD</fullName>
    </alternativeName>
</protein>
<reference key="1">
    <citation type="journal article" date="2005" name="J. Bacteriol.">
        <title>The genome of Sulfolobus acidocaldarius, a model organism of the Crenarchaeota.</title>
        <authorList>
            <person name="Chen L."/>
            <person name="Bruegger K."/>
            <person name="Skovgaard M."/>
            <person name="Redder P."/>
            <person name="She Q."/>
            <person name="Torarinsson E."/>
            <person name="Greve B."/>
            <person name="Awayez M."/>
            <person name="Zibat A."/>
            <person name="Klenk H.-P."/>
            <person name="Garrett R.A."/>
        </authorList>
    </citation>
    <scope>NUCLEOTIDE SEQUENCE [LARGE SCALE GENOMIC DNA]</scope>
    <source>
        <strain>ATCC 33909 / DSM 639 / JCM 8929 / NBRC 15157 / NCIMB 11770</strain>
    </source>
</reference>
<reference key="2">
    <citation type="journal article" date="2006" name="Mol. Cell">
        <title>The DNA repair helicases XPD and FancJ have essential iron-sulfur domains.</title>
        <authorList>
            <person name="Rudolf J."/>
            <person name="Makrantoni V."/>
            <person name="Ingledew W.J."/>
            <person name="Stark M.J."/>
            <person name="White M.F."/>
        </authorList>
    </citation>
    <scope>FUNCTION AS A 5'-3' HELICASE</scope>
    <scope>FUNCTION AS AN ATPASE</scope>
    <scope>CATALYTIC ACTIVITY</scope>
    <scope>COFACTOR</scope>
    <scope>BIOPHYSICOCHEMICAL PROPERTIES</scope>
    <scope>MUTAGENESIS OF LYS-35; LYS-84; CYS-88; CYS-102; CYS-105; PHE-136 AND CYS-137</scope>
</reference>
<reference evidence="8 9" key="3">
    <citation type="journal article" date="2008" name="Cell">
        <title>XPD helicase structures and activities: insights into the cancer and aging phenotypes from XPD mutations.</title>
        <authorList>
            <person name="Fan L."/>
            <person name="Fuss J.O."/>
            <person name="Cheng Q.J."/>
            <person name="Arvai A.S."/>
            <person name="Hammel M."/>
            <person name="Roberts V.A."/>
            <person name="Cooper P.K."/>
            <person name="Tainer J.A."/>
        </authorList>
    </citation>
    <scope>X-RAY CRYSTALLOGRAPHY (2.0 ANGSTROMS) IN COMPLEX WITH AND WITHOUT [4FE-4S] CLUSTER</scope>
    <scope>COFACTOR</scope>
    <scope>SUBUNIT</scope>
    <scope>DNA-BINDING</scope>
    <scope>MUTAGENESIS OF GLY-34; LYS-84; CYS-88; CYS-102; ARG-514; ASP-521 AND ARG-531</scope>
</reference>
<reference evidence="10" key="4">
    <citation type="journal article" date="2016" name="Nucleic Acids Res.">
        <title>Mechanism of DNA loading by the DNA repair helicase XPD.</title>
        <authorList>
            <person name="Constantinescu-Aruxandei D."/>
            <person name="Petrovic-Stojanovska B."/>
            <person name="Penedo J.C."/>
            <person name="White M.F."/>
            <person name="Naismith J.H."/>
        </authorList>
    </citation>
    <scope>X-RAY CRYSTALLOGRAPHY (2.29 ANGSTROMS) OF 8-346 IN COMPLEX WITH [4FE-4S] CLUSTER</scope>
    <scope>COFACTOR</scope>
</reference>
<gene>
    <name evidence="5" type="primary">xpd</name>
    <name type="ordered locus">Saci_0192</name>
</gene>
<evidence type="ECO:0000255" key="1">
    <source>
        <dbReference type="PROSITE-ProRule" id="PRU00541"/>
    </source>
</evidence>
<evidence type="ECO:0000269" key="2">
    <source>
    </source>
</evidence>
<evidence type="ECO:0000269" key="3">
    <source>
    </source>
</evidence>
<evidence type="ECO:0000269" key="4">
    <source>
    </source>
</evidence>
<evidence type="ECO:0000303" key="5">
    <source>
    </source>
</evidence>
<evidence type="ECO:0000303" key="6">
    <source>
    </source>
</evidence>
<evidence type="ECO:0000305" key="7"/>
<evidence type="ECO:0007744" key="8">
    <source>
        <dbReference type="PDB" id="3CRV"/>
    </source>
</evidence>
<evidence type="ECO:0007744" key="9">
    <source>
        <dbReference type="PDB" id="3CRW"/>
    </source>
</evidence>
<evidence type="ECO:0007744" key="10">
    <source>
        <dbReference type="PDB" id="5H8C"/>
    </source>
</evidence>
<evidence type="ECO:0007829" key="11">
    <source>
        <dbReference type="PDB" id="3CRV"/>
    </source>
</evidence>
<evidence type="ECO:0007829" key="12">
    <source>
        <dbReference type="PDB" id="5H8C"/>
    </source>
</evidence>